<protein>
    <recommendedName>
        <fullName>Capsid protein VP1</fullName>
        <shortName>CP</shortName>
    </recommendedName>
    <alternativeName>
        <fullName>Capsid protein</fullName>
    </alternativeName>
    <alternativeName>
        <fullName>Coat protein</fullName>
    </alternativeName>
    <component>
        <recommendedName>
            <fullName evidence="3">Capsid leader protein</fullName>
            <shortName evidence="3">LC</shortName>
        </recommendedName>
    </component>
    <component>
        <recommendedName>
            <fullName>Mature capsid protein</fullName>
        </recommendedName>
    </component>
</protein>
<accession>P36285</accession>
<organism>
    <name type="scientific">San Miguel sea lion virus serotype 4</name>
    <name type="common">SMSV-4</name>
    <name type="synonym">SMSV serotype 4</name>
    <dbReference type="NCBI Taxonomy" id="36407"/>
    <lineage>
        <taxon>Viruses</taxon>
        <taxon>Riboviria</taxon>
        <taxon>Orthornavirae</taxon>
        <taxon>Pisuviricota</taxon>
        <taxon>Pisoniviricetes</taxon>
        <taxon>Picornavirales</taxon>
        <taxon>Caliciviridae</taxon>
        <taxon>Vesivirus</taxon>
        <taxon>Vesicular exanthema of swine virus</taxon>
    </lineage>
</organism>
<feature type="chain" id="PRO_0000460238" description="Capsid protein VP1">
    <location>
        <begin position="1"/>
        <end position="703"/>
    </location>
</feature>
<feature type="chain" id="PRO_0000460239" description="Capsid leader protein">
    <location>
        <begin position="1"/>
        <end position="152"/>
    </location>
</feature>
<feature type="chain" id="PRO_0000036885" description="Mature capsid protein" evidence="1">
    <location>
        <begin position="153"/>
        <end position="702"/>
    </location>
</feature>
<feature type="site" description="Cleavage; by viral protease" evidence="3">
    <location>
        <begin position="152"/>
        <end position="153"/>
    </location>
</feature>
<feature type="helix" evidence="7">
    <location>
        <begin position="178"/>
        <end position="189"/>
    </location>
</feature>
<feature type="helix" evidence="7">
    <location>
        <begin position="196"/>
        <end position="198"/>
    </location>
</feature>
<feature type="strand" evidence="7">
    <location>
        <begin position="202"/>
        <end position="213"/>
    </location>
</feature>
<feature type="strand" evidence="7">
    <location>
        <begin position="218"/>
        <end position="223"/>
    </location>
</feature>
<feature type="helix" evidence="7">
    <location>
        <begin position="226"/>
        <end position="228"/>
    </location>
</feature>
<feature type="helix" evidence="7">
    <location>
        <begin position="230"/>
        <end position="235"/>
    </location>
</feature>
<feature type="helix" evidence="7">
    <location>
        <begin position="236"/>
        <end position="238"/>
    </location>
</feature>
<feature type="strand" evidence="7">
    <location>
        <begin position="239"/>
        <end position="243"/>
    </location>
</feature>
<feature type="strand" evidence="7">
    <location>
        <begin position="246"/>
        <end position="253"/>
    </location>
</feature>
<feature type="strand" evidence="7">
    <location>
        <begin position="261"/>
        <end position="267"/>
    </location>
</feature>
<feature type="helix" evidence="7">
    <location>
        <begin position="277"/>
        <end position="280"/>
    </location>
</feature>
<feature type="strand" evidence="7">
    <location>
        <begin position="285"/>
        <end position="288"/>
    </location>
</feature>
<feature type="strand" evidence="7">
    <location>
        <begin position="295"/>
        <end position="299"/>
    </location>
</feature>
<feature type="strand" evidence="7">
    <location>
        <begin position="304"/>
        <end position="309"/>
    </location>
</feature>
<feature type="strand" evidence="7">
    <location>
        <begin position="317"/>
        <end position="320"/>
    </location>
</feature>
<feature type="strand" evidence="7">
    <location>
        <begin position="332"/>
        <end position="341"/>
    </location>
</feature>
<feature type="strand" evidence="7">
    <location>
        <begin position="365"/>
        <end position="367"/>
    </location>
</feature>
<feature type="helix" evidence="7">
    <location>
        <begin position="371"/>
        <end position="373"/>
    </location>
</feature>
<feature type="strand" evidence="7">
    <location>
        <begin position="375"/>
        <end position="382"/>
    </location>
</feature>
<feature type="strand" evidence="7">
    <location>
        <begin position="385"/>
        <end position="388"/>
    </location>
</feature>
<feature type="strand" evidence="7">
    <location>
        <begin position="390"/>
        <end position="393"/>
    </location>
</feature>
<feature type="strand" evidence="7">
    <location>
        <begin position="405"/>
        <end position="409"/>
    </location>
</feature>
<feature type="strand" evidence="7">
    <location>
        <begin position="416"/>
        <end position="422"/>
    </location>
</feature>
<feature type="strand" evidence="7">
    <location>
        <begin position="429"/>
        <end position="438"/>
    </location>
</feature>
<feature type="turn" evidence="7">
    <location>
        <begin position="468"/>
        <end position="470"/>
    </location>
</feature>
<feature type="strand" evidence="7">
    <location>
        <begin position="471"/>
        <end position="473"/>
    </location>
</feature>
<feature type="helix" evidence="7">
    <location>
        <begin position="479"/>
        <end position="481"/>
    </location>
</feature>
<feature type="turn" evidence="7">
    <location>
        <begin position="485"/>
        <end position="488"/>
    </location>
</feature>
<feature type="strand" evidence="7">
    <location>
        <begin position="490"/>
        <end position="498"/>
    </location>
</feature>
<feature type="helix" evidence="7">
    <location>
        <begin position="508"/>
        <end position="512"/>
    </location>
</feature>
<feature type="strand" evidence="7">
    <location>
        <begin position="519"/>
        <end position="526"/>
    </location>
</feature>
<feature type="strand" evidence="7">
    <location>
        <begin position="528"/>
        <end position="533"/>
    </location>
</feature>
<feature type="strand" evidence="7">
    <location>
        <begin position="542"/>
        <end position="547"/>
    </location>
</feature>
<feature type="strand" evidence="7">
    <location>
        <begin position="550"/>
        <end position="564"/>
    </location>
</feature>
<feature type="strand" evidence="7">
    <location>
        <begin position="568"/>
        <end position="570"/>
    </location>
</feature>
<feature type="helix" evidence="7">
    <location>
        <begin position="576"/>
        <end position="578"/>
    </location>
</feature>
<feature type="strand" evidence="7">
    <location>
        <begin position="587"/>
        <end position="589"/>
    </location>
</feature>
<feature type="strand" evidence="7">
    <location>
        <begin position="594"/>
        <end position="600"/>
    </location>
</feature>
<feature type="strand" evidence="7">
    <location>
        <begin position="603"/>
        <end position="610"/>
    </location>
</feature>
<feature type="strand" evidence="7">
    <location>
        <begin position="615"/>
        <end position="620"/>
    </location>
</feature>
<feature type="helix" evidence="7">
    <location>
        <begin position="621"/>
        <end position="629"/>
    </location>
</feature>
<feature type="strand" evidence="7">
    <location>
        <begin position="638"/>
        <end position="645"/>
    </location>
</feature>
<feature type="strand" evidence="7">
    <location>
        <begin position="647"/>
        <end position="649"/>
    </location>
</feature>
<feature type="strand" evidence="7">
    <location>
        <begin position="651"/>
        <end position="656"/>
    </location>
</feature>
<feature type="strand" evidence="7">
    <location>
        <begin position="662"/>
        <end position="665"/>
    </location>
</feature>
<feature type="strand" evidence="7">
    <location>
        <begin position="678"/>
        <end position="686"/>
    </location>
</feature>
<keyword id="KW-0002">3D-structure</keyword>
<keyword id="KW-0167">Capsid protein</keyword>
<keyword id="KW-1035">Host cytoplasm</keyword>
<keyword id="KW-1142">T=3 icosahedral capsid protein</keyword>
<keyword id="KW-0946">Virion</keyword>
<name>CAPSD_SMSV4</name>
<proteinExistence type="evidence at protein level"/>
<dbReference type="EMBL" id="M87482">
    <property type="protein sequence ID" value="AAA16220.1"/>
    <property type="molecule type" value="Unassigned_RNA"/>
</dbReference>
<dbReference type="PIR" id="C48562">
    <property type="entry name" value="C48562"/>
</dbReference>
<dbReference type="PDB" id="2GH8">
    <property type="method" value="X-ray"/>
    <property type="resolution" value="3.20 A"/>
    <property type="chains" value="A/B/C=153-703"/>
</dbReference>
<dbReference type="PDBsum" id="2GH8"/>
<dbReference type="SMR" id="P36285"/>
<dbReference type="DIP" id="DIP-61173N"/>
<dbReference type="EvolutionaryTrace" id="P36285"/>
<dbReference type="GO" id="GO:0030430">
    <property type="term" value="C:host cell cytoplasm"/>
    <property type="evidence" value="ECO:0007669"/>
    <property type="project" value="UniProtKB-SubCell"/>
</dbReference>
<dbReference type="GO" id="GO:0039617">
    <property type="term" value="C:T=3 icosahedral viral capsid"/>
    <property type="evidence" value="ECO:0007669"/>
    <property type="project" value="UniProtKB-KW"/>
</dbReference>
<dbReference type="CDD" id="cd00205">
    <property type="entry name" value="rhv_like"/>
    <property type="match status" value="1"/>
</dbReference>
<dbReference type="Gene3D" id="2.60.120.20">
    <property type="match status" value="1"/>
</dbReference>
<dbReference type="InterPro" id="IPR004005">
    <property type="entry name" value="Calicivirus_coat"/>
</dbReference>
<dbReference type="InterPro" id="IPR033703">
    <property type="entry name" value="Rhv-like"/>
</dbReference>
<dbReference type="InterPro" id="IPR029053">
    <property type="entry name" value="Viral_coat"/>
</dbReference>
<dbReference type="Pfam" id="PF00915">
    <property type="entry name" value="Calici_coat"/>
    <property type="match status" value="1"/>
</dbReference>
<dbReference type="SUPFAM" id="SSF88633">
    <property type="entry name" value="Positive stranded ssRNA viruses"/>
    <property type="match status" value="1"/>
</dbReference>
<reference key="1">
    <citation type="journal article" date="1992" name="Virus Res.">
        <title>Nucleotide sequence of the capsid protein gene of two serotypes of San Miguel sea lion virus: identification of conserved and non-conserved amino acid sequences among calicivirus capsid proteins.</title>
        <authorList>
            <person name="Neill J.D."/>
        </authorList>
    </citation>
    <scope>NUCLEOTIDE SEQUENCE [GENOMIC RNA]</scope>
</reference>
<reference evidence="6" key="2">
    <citation type="journal article" date="2006" name="Proc. Natl. Acad. Sci. U.S.A.">
        <title>X-ray structure of a native calicivirus: structural insights into antigenic diversity and host specificity.</title>
        <authorList>
            <person name="Chen R."/>
            <person name="Neill J.D."/>
            <person name="Estes M.K."/>
            <person name="Prasad B.V.V."/>
        </authorList>
    </citation>
    <scope>X-RAY CRYSTALLOGRAPHY (3.20 ANGSTROMS) OF 153-703</scope>
</reference>
<comment type="function">
    <text evidence="2">Capsid protein self assembles to form an icosahedral capsid with a T=3 symmetry, about 38 nm in diameter, and consisting of 180 capsid proteins. A smaller form of capsid with a diameter of 23 nm might be capsid proteins assembled as icosahedron with T=1 symmetry. The capsid encapsulates the genomic RNA and is decorated with VP2 proteins.</text>
</comment>
<comment type="subunit">
    <text evidence="2 4">Homodimer (By similarity). Homomultimer (By similarity). Interacts with the minor capsid protein VP2 (By similarity). May bind to VP3 and Vpg proteins.</text>
</comment>
<comment type="subcellular location">
    <molecule>Mature capsid protein</molecule>
    <subcellularLocation>
        <location evidence="3">Virion</location>
    </subcellularLocation>
    <subcellularLocation>
        <location>Host cytoplasm</location>
    </subcellularLocation>
</comment>
<comment type="PTM">
    <molecule>Capsid protein VP1</molecule>
    <text evidence="2">Cleaved by the viral protease to produce mature capsid protein.</text>
</comment>
<comment type="similarity">
    <text evidence="5">Belongs to the caliciviridae capsid protein family.</text>
</comment>
<evidence type="ECO:0000250" key="1"/>
<evidence type="ECO:0000250" key="2">
    <source>
        <dbReference type="UniProtKB" id="P27406"/>
    </source>
</evidence>
<evidence type="ECO:0000250" key="3">
    <source>
        <dbReference type="UniProtKB" id="Q66915"/>
    </source>
</evidence>
<evidence type="ECO:0000250" key="4">
    <source>
        <dbReference type="UniProtKB" id="Q83884"/>
    </source>
</evidence>
<evidence type="ECO:0000305" key="5"/>
<evidence type="ECO:0007744" key="6">
    <source>
        <dbReference type="PDB" id="2GH8"/>
    </source>
</evidence>
<evidence type="ECO:0007829" key="7">
    <source>
        <dbReference type="PDB" id="2GH8"/>
    </source>
</evidence>
<organismHost>
    <name type="scientific">Otariidae</name>
    <name type="common">fur seals &amp; sea lions</name>
    <dbReference type="NCBI Taxonomy" id="9702"/>
</organismHost>
<gene>
    <name type="ORF">ORF2</name>
</gene>
<sequence>MATTHTLLSFDDLEFLLHRKDLTDLYGERCGTLNLVINPYELFLPDELDDDCCDDPFNCCFPDVYASIGTEYSYIDPPELIHEEHCATNGTWPNGDPCEPILPPFTITGTHHYYATKPGEVVSGILSKLGSSWDPSLRSTADVSNSFTFRAESDGPGSAEIVTEEQGTVVQQQPAPAPTALATLATASTGKSVEQEWMTFFSYHTSINWSTVESQGKILYSQALNPSINPYLDHIAKLYSTWSGGIDVRFTVSGSGVFGGKLAALLVPPGVEPIESVSMLQYPHVLFDARQTEPVIFTIPDIRKTLFHSMDETDTTKLVINPYENGVENKTTCSITVETRPSADFTFALLKPPGSLIKHGSIPSDLIPRNSAHWMGNRWWSTISGFSVQPRVFQSNRHFDFDSTTTGWSTPYYVPIEIKIQGKVGSNNKWFHVIDTDKALVPGIPDGWPDTTIPDETKATNGNFSYGESYRAGSTTIKPNENSTHFKGTYICGTLSTVEIPENDEQQIKTEAEKKSQTMYVVTADFKDTIVKPQHKISPQKLVVYFDGPEKDLTMSATLSPLGYTLVDEQPVGSVSSRVVRIATLPEAFTQGGNYPIFYVNKIKVGYFDRATTNCYNSQILMTSQRLAEGNYNLPPDSLAVYRITDSSSQWFDIGINHDGFSYVGLSDLPNDLSFPLTSTFMGVQLARVKLASKVKAHTITAK</sequence>